<proteinExistence type="inferred from homology"/>
<evidence type="ECO:0000255" key="1">
    <source>
        <dbReference type="HAMAP-Rule" id="MF_01346"/>
    </source>
</evidence>
<evidence type="ECO:0000305" key="2"/>
<sequence>MQLNSTEISDLIKQRIESFNVVSEARNEGTIVSVSDGIIRIHGLADVMQGEMIELPGNRYALALNLERDSVGAVVMGPYADLREGMKVTGTGRILEVPVGPELLGRVVNTLGEPIDGKGPIGAKQTSPVEVIAPGVIDRKSVDQPVQTGYKSVDSMIPIGRGQRELIIGDRQTGKTALAIDAIINQKNSGIYSIYVAIGQKASTIANVVRKLEEHGALKNTIVVVASASESAALQYLAPYSGCAMGEYFRDRGEDALIVYDDLSKQAVAYRQISLLLRRPPGREAFPGDVFYLHSRLLERAARVNEEYVERFTKGEVKGKTGSLTALPIIETQAGDVSAFVPTNVISITDGQIFLQTELFNAGVRPAVDPGISVSRVGGAAQTKIVKKLSGGIRTALAAYRELAAFAQFSSDLDEATKRQLTHGQKVTELMKQKQYAPMSVFDQALVIFAAERGYLTDVELNKVLDFEAALLSYARAHYAELAAQIDKTGAYNDEIEAQLKKLVDDFKATQTW</sequence>
<accession>A5F457</accession>
<accession>C3M337</accession>
<gene>
    <name evidence="1" type="primary">atpA</name>
    <name type="ordered locus">VC0395_A2526</name>
    <name type="ordered locus">VC395_0189</name>
</gene>
<keyword id="KW-0066">ATP synthesis</keyword>
<keyword id="KW-0067">ATP-binding</keyword>
<keyword id="KW-0997">Cell inner membrane</keyword>
<keyword id="KW-1003">Cell membrane</keyword>
<keyword id="KW-0139">CF(1)</keyword>
<keyword id="KW-0375">Hydrogen ion transport</keyword>
<keyword id="KW-0406">Ion transport</keyword>
<keyword id="KW-0472">Membrane</keyword>
<keyword id="KW-0547">Nucleotide-binding</keyword>
<keyword id="KW-1278">Translocase</keyword>
<keyword id="KW-0813">Transport</keyword>
<comment type="function">
    <text evidence="1">Produces ATP from ADP in the presence of a proton gradient across the membrane. The alpha chain is a regulatory subunit.</text>
</comment>
<comment type="catalytic activity">
    <reaction evidence="1">
        <text>ATP + H2O + 4 H(+)(in) = ADP + phosphate + 5 H(+)(out)</text>
        <dbReference type="Rhea" id="RHEA:57720"/>
        <dbReference type="ChEBI" id="CHEBI:15377"/>
        <dbReference type="ChEBI" id="CHEBI:15378"/>
        <dbReference type="ChEBI" id="CHEBI:30616"/>
        <dbReference type="ChEBI" id="CHEBI:43474"/>
        <dbReference type="ChEBI" id="CHEBI:456216"/>
        <dbReference type="EC" id="7.1.2.2"/>
    </reaction>
</comment>
<comment type="subunit">
    <text evidence="1">F-type ATPases have 2 components, CF(1) - the catalytic core - and CF(0) - the membrane proton channel. CF(1) has five subunits: alpha(3), beta(3), gamma(1), delta(1), epsilon(1). CF(0) has three main subunits: a(1), b(2) and c(9-12). The alpha and beta chains form an alternating ring which encloses part of the gamma chain. CF(1) is attached to CF(0) by a central stalk formed by the gamma and epsilon chains, while a peripheral stalk is formed by the delta and b chains.</text>
</comment>
<comment type="subcellular location">
    <subcellularLocation>
        <location evidence="1">Cell inner membrane</location>
        <topology evidence="1">Peripheral membrane protein</topology>
    </subcellularLocation>
</comment>
<comment type="similarity">
    <text evidence="1">Belongs to the ATPase alpha/beta chains family.</text>
</comment>
<comment type="sequence caution" evidence="2">
    <conflict type="erroneous initiation">
        <sequence resource="EMBL-CDS" id="ACP08216"/>
    </conflict>
</comment>
<organism>
    <name type="scientific">Vibrio cholerae serotype O1 (strain ATCC 39541 / Classical Ogawa 395 / O395)</name>
    <dbReference type="NCBI Taxonomy" id="345073"/>
    <lineage>
        <taxon>Bacteria</taxon>
        <taxon>Pseudomonadati</taxon>
        <taxon>Pseudomonadota</taxon>
        <taxon>Gammaproteobacteria</taxon>
        <taxon>Vibrionales</taxon>
        <taxon>Vibrionaceae</taxon>
        <taxon>Vibrio</taxon>
    </lineage>
</organism>
<dbReference type="EC" id="7.1.2.2" evidence="1"/>
<dbReference type="EMBL" id="CP000627">
    <property type="protein sequence ID" value="ABQ21090.1"/>
    <property type="molecule type" value="Genomic_DNA"/>
</dbReference>
<dbReference type="EMBL" id="CP001235">
    <property type="protein sequence ID" value="ACP08216.1"/>
    <property type="status" value="ALT_INIT"/>
    <property type="molecule type" value="Genomic_DNA"/>
</dbReference>
<dbReference type="RefSeq" id="WP_001176739.1">
    <property type="nucleotide sequence ID" value="NZ_JAACZH010000018.1"/>
</dbReference>
<dbReference type="SMR" id="A5F457"/>
<dbReference type="GeneID" id="69721150"/>
<dbReference type="KEGG" id="vco:VC0395_A2526"/>
<dbReference type="KEGG" id="vcr:VC395_0189"/>
<dbReference type="PATRIC" id="fig|345073.21.peg.178"/>
<dbReference type="eggNOG" id="COG0056">
    <property type="taxonomic scope" value="Bacteria"/>
</dbReference>
<dbReference type="HOGENOM" id="CLU_010091_2_1_6"/>
<dbReference type="OrthoDB" id="9803053at2"/>
<dbReference type="Proteomes" id="UP000000249">
    <property type="component" value="Chromosome 2"/>
</dbReference>
<dbReference type="GO" id="GO:0005886">
    <property type="term" value="C:plasma membrane"/>
    <property type="evidence" value="ECO:0007669"/>
    <property type="project" value="UniProtKB-SubCell"/>
</dbReference>
<dbReference type="GO" id="GO:0045259">
    <property type="term" value="C:proton-transporting ATP synthase complex"/>
    <property type="evidence" value="ECO:0007669"/>
    <property type="project" value="UniProtKB-KW"/>
</dbReference>
<dbReference type="GO" id="GO:0043531">
    <property type="term" value="F:ADP binding"/>
    <property type="evidence" value="ECO:0007669"/>
    <property type="project" value="TreeGrafter"/>
</dbReference>
<dbReference type="GO" id="GO:0005524">
    <property type="term" value="F:ATP binding"/>
    <property type="evidence" value="ECO:0007669"/>
    <property type="project" value="UniProtKB-UniRule"/>
</dbReference>
<dbReference type="GO" id="GO:0046933">
    <property type="term" value="F:proton-transporting ATP synthase activity, rotational mechanism"/>
    <property type="evidence" value="ECO:0007669"/>
    <property type="project" value="UniProtKB-UniRule"/>
</dbReference>
<dbReference type="CDD" id="cd18113">
    <property type="entry name" value="ATP-synt_F1_alpha_C"/>
    <property type="match status" value="1"/>
</dbReference>
<dbReference type="CDD" id="cd18116">
    <property type="entry name" value="ATP-synt_F1_alpha_N"/>
    <property type="match status" value="1"/>
</dbReference>
<dbReference type="CDD" id="cd01132">
    <property type="entry name" value="F1-ATPase_alpha_CD"/>
    <property type="match status" value="1"/>
</dbReference>
<dbReference type="FunFam" id="1.20.150.20:FF:000001">
    <property type="entry name" value="ATP synthase subunit alpha"/>
    <property type="match status" value="1"/>
</dbReference>
<dbReference type="FunFam" id="2.40.30.20:FF:000001">
    <property type="entry name" value="ATP synthase subunit alpha"/>
    <property type="match status" value="1"/>
</dbReference>
<dbReference type="FunFam" id="3.40.50.300:FF:000002">
    <property type="entry name" value="ATP synthase subunit alpha"/>
    <property type="match status" value="1"/>
</dbReference>
<dbReference type="Gene3D" id="2.40.30.20">
    <property type="match status" value="1"/>
</dbReference>
<dbReference type="Gene3D" id="1.20.150.20">
    <property type="entry name" value="ATP synthase alpha/beta chain, C-terminal domain"/>
    <property type="match status" value="1"/>
</dbReference>
<dbReference type="Gene3D" id="3.40.50.300">
    <property type="entry name" value="P-loop containing nucleotide triphosphate hydrolases"/>
    <property type="match status" value="1"/>
</dbReference>
<dbReference type="HAMAP" id="MF_01346">
    <property type="entry name" value="ATP_synth_alpha_bact"/>
    <property type="match status" value="1"/>
</dbReference>
<dbReference type="InterPro" id="IPR023366">
    <property type="entry name" value="ATP_synth_asu-like_sf"/>
</dbReference>
<dbReference type="InterPro" id="IPR000793">
    <property type="entry name" value="ATP_synth_asu_C"/>
</dbReference>
<dbReference type="InterPro" id="IPR038376">
    <property type="entry name" value="ATP_synth_asu_C_sf"/>
</dbReference>
<dbReference type="InterPro" id="IPR033732">
    <property type="entry name" value="ATP_synth_F1_a_nt-bd_dom"/>
</dbReference>
<dbReference type="InterPro" id="IPR005294">
    <property type="entry name" value="ATP_synth_F1_asu"/>
</dbReference>
<dbReference type="InterPro" id="IPR020003">
    <property type="entry name" value="ATPase_a/bsu_AS"/>
</dbReference>
<dbReference type="InterPro" id="IPR004100">
    <property type="entry name" value="ATPase_F1/V1/A1_a/bsu_N"/>
</dbReference>
<dbReference type="InterPro" id="IPR036121">
    <property type="entry name" value="ATPase_F1/V1/A1_a/bsu_N_sf"/>
</dbReference>
<dbReference type="InterPro" id="IPR000194">
    <property type="entry name" value="ATPase_F1/V1/A1_a/bsu_nucl-bd"/>
</dbReference>
<dbReference type="InterPro" id="IPR027417">
    <property type="entry name" value="P-loop_NTPase"/>
</dbReference>
<dbReference type="NCBIfam" id="TIGR00962">
    <property type="entry name" value="atpA"/>
    <property type="match status" value="1"/>
</dbReference>
<dbReference type="NCBIfam" id="NF009884">
    <property type="entry name" value="PRK13343.1"/>
    <property type="match status" value="1"/>
</dbReference>
<dbReference type="PANTHER" id="PTHR48082">
    <property type="entry name" value="ATP SYNTHASE SUBUNIT ALPHA, MITOCHONDRIAL"/>
    <property type="match status" value="1"/>
</dbReference>
<dbReference type="PANTHER" id="PTHR48082:SF2">
    <property type="entry name" value="ATP SYNTHASE SUBUNIT ALPHA, MITOCHONDRIAL"/>
    <property type="match status" value="1"/>
</dbReference>
<dbReference type="Pfam" id="PF00006">
    <property type="entry name" value="ATP-synt_ab"/>
    <property type="match status" value="1"/>
</dbReference>
<dbReference type="Pfam" id="PF00306">
    <property type="entry name" value="ATP-synt_ab_C"/>
    <property type="match status" value="1"/>
</dbReference>
<dbReference type="Pfam" id="PF02874">
    <property type="entry name" value="ATP-synt_ab_N"/>
    <property type="match status" value="1"/>
</dbReference>
<dbReference type="SUPFAM" id="SSF47917">
    <property type="entry name" value="C-terminal domain of alpha and beta subunits of F1 ATP synthase"/>
    <property type="match status" value="1"/>
</dbReference>
<dbReference type="SUPFAM" id="SSF50615">
    <property type="entry name" value="N-terminal domain of alpha and beta subunits of F1 ATP synthase"/>
    <property type="match status" value="1"/>
</dbReference>
<dbReference type="SUPFAM" id="SSF52540">
    <property type="entry name" value="P-loop containing nucleoside triphosphate hydrolases"/>
    <property type="match status" value="1"/>
</dbReference>
<dbReference type="PROSITE" id="PS00152">
    <property type="entry name" value="ATPASE_ALPHA_BETA"/>
    <property type="match status" value="1"/>
</dbReference>
<reference key="1">
    <citation type="submission" date="2007-03" db="EMBL/GenBank/DDBJ databases">
        <authorList>
            <person name="Heidelberg J."/>
        </authorList>
    </citation>
    <scope>NUCLEOTIDE SEQUENCE [LARGE SCALE GENOMIC DNA]</scope>
    <source>
        <strain>ATCC 39541 / Classical Ogawa 395 / O395</strain>
    </source>
</reference>
<reference key="2">
    <citation type="journal article" date="2008" name="PLoS ONE">
        <title>A recalibrated molecular clock and independent origins for the cholera pandemic clones.</title>
        <authorList>
            <person name="Feng L."/>
            <person name="Reeves P.R."/>
            <person name="Lan R."/>
            <person name="Ren Y."/>
            <person name="Gao C."/>
            <person name="Zhou Z."/>
            <person name="Ren Y."/>
            <person name="Cheng J."/>
            <person name="Wang W."/>
            <person name="Wang J."/>
            <person name="Qian W."/>
            <person name="Li D."/>
            <person name="Wang L."/>
        </authorList>
    </citation>
    <scope>NUCLEOTIDE SEQUENCE [LARGE SCALE GENOMIC DNA]</scope>
    <source>
        <strain>ATCC 39541 / Classical Ogawa 395 / O395</strain>
    </source>
</reference>
<feature type="chain" id="PRO_1000073360" description="ATP synthase subunit alpha">
    <location>
        <begin position="1"/>
        <end position="513"/>
    </location>
</feature>
<feature type="binding site" evidence="1">
    <location>
        <begin position="169"/>
        <end position="176"/>
    </location>
    <ligand>
        <name>ATP</name>
        <dbReference type="ChEBI" id="CHEBI:30616"/>
    </ligand>
</feature>
<feature type="site" description="Required for activity" evidence="1">
    <location>
        <position position="373"/>
    </location>
</feature>
<name>ATPA_VIBC3</name>
<protein>
    <recommendedName>
        <fullName evidence="1">ATP synthase subunit alpha</fullName>
        <ecNumber evidence="1">7.1.2.2</ecNumber>
    </recommendedName>
    <alternativeName>
        <fullName evidence="1">ATP synthase F1 sector subunit alpha</fullName>
    </alternativeName>
    <alternativeName>
        <fullName evidence="1">F-ATPase subunit alpha</fullName>
    </alternativeName>
</protein>